<dbReference type="EMBL" id="EF990748">
    <property type="protein sequence ID" value="ABV64402.1"/>
    <property type="molecule type" value="mRNA"/>
</dbReference>
<dbReference type="SMR" id="B5KL40"/>
<dbReference type="MEROPS" id="I02.052"/>
<dbReference type="GO" id="GO:0005576">
    <property type="term" value="C:extracellular region"/>
    <property type="evidence" value="ECO:0007669"/>
    <property type="project" value="UniProtKB-SubCell"/>
</dbReference>
<dbReference type="GO" id="GO:0004867">
    <property type="term" value="F:serine-type endopeptidase inhibitor activity"/>
    <property type="evidence" value="ECO:0007669"/>
    <property type="project" value="UniProtKB-KW"/>
</dbReference>
<dbReference type="CDD" id="cd22594">
    <property type="entry name" value="Kunitz_textilinin-like"/>
    <property type="match status" value="1"/>
</dbReference>
<dbReference type="FunFam" id="4.10.410.10:FF:000021">
    <property type="entry name" value="Serine protease inhibitor, putative"/>
    <property type="match status" value="1"/>
</dbReference>
<dbReference type="Gene3D" id="4.10.410.10">
    <property type="entry name" value="Pancreatic trypsin inhibitor Kunitz domain"/>
    <property type="match status" value="1"/>
</dbReference>
<dbReference type="InterPro" id="IPR002223">
    <property type="entry name" value="Kunitz_BPTI"/>
</dbReference>
<dbReference type="InterPro" id="IPR036880">
    <property type="entry name" value="Kunitz_BPTI_sf"/>
</dbReference>
<dbReference type="InterPro" id="IPR020901">
    <property type="entry name" value="Prtase_inh_Kunz-CS"/>
</dbReference>
<dbReference type="InterPro" id="IPR050098">
    <property type="entry name" value="TFPI/VKTCI-like"/>
</dbReference>
<dbReference type="PANTHER" id="PTHR10083">
    <property type="entry name" value="KUNITZ-TYPE PROTEASE INHIBITOR-RELATED"/>
    <property type="match status" value="1"/>
</dbReference>
<dbReference type="Pfam" id="PF00014">
    <property type="entry name" value="Kunitz_BPTI"/>
    <property type="match status" value="1"/>
</dbReference>
<dbReference type="PRINTS" id="PR00759">
    <property type="entry name" value="BASICPTASE"/>
</dbReference>
<dbReference type="SMART" id="SM00131">
    <property type="entry name" value="KU"/>
    <property type="match status" value="1"/>
</dbReference>
<dbReference type="SUPFAM" id="SSF57362">
    <property type="entry name" value="BPTI-like"/>
    <property type="match status" value="1"/>
</dbReference>
<dbReference type="PROSITE" id="PS00280">
    <property type="entry name" value="BPTI_KUNITZ_1"/>
    <property type="match status" value="1"/>
</dbReference>
<dbReference type="PROSITE" id="PS50279">
    <property type="entry name" value="BPTI_KUNITZ_2"/>
    <property type="match status" value="1"/>
</dbReference>
<evidence type="ECO:0000250" key="1"/>
<evidence type="ECO:0000255" key="2"/>
<evidence type="ECO:0000255" key="3">
    <source>
        <dbReference type="PROSITE-ProRule" id="PRU00031"/>
    </source>
</evidence>
<evidence type="ECO:0000305" key="4"/>
<accession>B5KL40</accession>
<comment type="function">
    <text evidence="1">Serine protease inhibitor.</text>
</comment>
<comment type="subcellular location">
    <subcellularLocation>
        <location evidence="1">Secreted</location>
    </subcellularLocation>
</comment>
<comment type="tissue specificity">
    <text>Expressed by the venom gland.</text>
</comment>
<comment type="similarity">
    <text evidence="4">Belongs to the venom Kunitz-type family.</text>
</comment>
<feature type="signal peptide" evidence="2">
    <location>
        <begin position="1"/>
        <end position="24"/>
    </location>
</feature>
<feature type="chain" id="PRO_5000395599" description="Kunitz-type serine protease inhibitor superbin-3">
    <location>
        <begin position="25"/>
        <end position="83"/>
    </location>
</feature>
<feature type="domain" description="BPTI/Kunitz inhibitor" evidence="3">
    <location>
        <begin position="31"/>
        <end position="81"/>
    </location>
</feature>
<feature type="site" description="Reactive bond for trypsin" evidence="1">
    <location>
        <begin position="41"/>
        <end position="42"/>
    </location>
</feature>
<feature type="disulfide bond" evidence="3">
    <location>
        <begin position="31"/>
        <end position="81"/>
    </location>
</feature>
<feature type="disulfide bond" evidence="3">
    <location>
        <begin position="40"/>
        <end position="64"/>
    </location>
</feature>
<feature type="disulfide bond" evidence="3">
    <location>
        <begin position="56"/>
        <end position="77"/>
    </location>
</feature>
<reference key="1">
    <citation type="submission" date="2007-06" db="EMBL/GenBank/DDBJ databases">
        <title>Identification of Kunitz-type serine protease inhibitors from the venom glands of Australian elapid snakes.</title>
        <authorList>
            <person name="St Pierre L."/>
            <person name="Earl S."/>
        </authorList>
    </citation>
    <scope>NUCLEOTIDE SEQUENCE [MRNA]</scope>
    <source>
        <tissue>Venom gland</tissue>
    </source>
</reference>
<organism>
    <name type="scientific">Austrelaps superbus</name>
    <name type="common">Lowland copperhead snake</name>
    <name type="synonym">Hoplocephalus superbus</name>
    <dbReference type="NCBI Taxonomy" id="29156"/>
    <lineage>
        <taxon>Eukaryota</taxon>
        <taxon>Metazoa</taxon>
        <taxon>Chordata</taxon>
        <taxon>Craniata</taxon>
        <taxon>Vertebrata</taxon>
        <taxon>Euteleostomi</taxon>
        <taxon>Lepidosauria</taxon>
        <taxon>Squamata</taxon>
        <taxon>Bifurcata</taxon>
        <taxon>Unidentata</taxon>
        <taxon>Episquamata</taxon>
        <taxon>Toxicofera</taxon>
        <taxon>Serpentes</taxon>
        <taxon>Colubroidea</taxon>
        <taxon>Elapidae</taxon>
        <taxon>Hydrophiinae</taxon>
        <taxon>Austrelaps</taxon>
    </lineage>
</organism>
<proteinExistence type="evidence at transcript level"/>
<sequence>MSSGGLLLLLGLLTLWEVLTPVSSKDRPEFCELPADSGSCKGNFQAFYYNPVQHQCLEFIYGGCDGNANNFKTIDECKRTCAA</sequence>
<name>VKT3_AUSSU</name>
<protein>
    <recommendedName>
        <fullName>Kunitz-type serine protease inhibitor superbin-3</fullName>
    </recommendedName>
</protein>
<keyword id="KW-1015">Disulfide bond</keyword>
<keyword id="KW-0646">Protease inhibitor</keyword>
<keyword id="KW-0964">Secreted</keyword>
<keyword id="KW-0722">Serine protease inhibitor</keyword>
<keyword id="KW-0732">Signal</keyword>